<reference key="1">
    <citation type="journal article" date="1991" name="J. Bone Miner. Res.">
        <title>cDNA and deduced amino acid sequence of mouse matrix gla protein: one of five glutamic acid residues potentially modified to gla is not conserved in the mouse sequence.</title>
        <authorList>
            <person name="Ikeda T."/>
            <person name="Yamaguchi A."/>
            <person name="Icho T."/>
            <person name="Tsuchida N."/>
            <person name="Yoshiki S."/>
        </authorList>
    </citation>
    <scope>NUCLEOTIDE SEQUENCE [MRNA]</scope>
    <source>
        <strain>C57BL/6J</strain>
    </source>
</reference>
<reference key="2">
    <citation type="journal article" date="1995" name="J. Bone Miner. Res.">
        <title>The matrix Gla protein gene is a marker of the chondrogenesis cell lineage during mouse development.</title>
        <authorList>
            <person name="Luo G."/>
            <person name="D'Souza R."/>
            <person name="Hogue D."/>
            <person name="Karsenty G."/>
        </authorList>
    </citation>
    <scope>NUCLEOTIDE SEQUENCE [GENOMIC DNA]</scope>
    <source>
        <strain>129/Sv</strain>
    </source>
</reference>
<reference key="3">
    <citation type="journal article" date="2005" name="Science">
        <title>The transcriptional landscape of the mammalian genome.</title>
        <authorList>
            <person name="Carninci P."/>
            <person name="Kasukawa T."/>
            <person name="Katayama S."/>
            <person name="Gough J."/>
            <person name="Frith M.C."/>
            <person name="Maeda N."/>
            <person name="Oyama R."/>
            <person name="Ravasi T."/>
            <person name="Lenhard B."/>
            <person name="Wells C."/>
            <person name="Kodzius R."/>
            <person name="Shimokawa K."/>
            <person name="Bajic V.B."/>
            <person name="Brenner S.E."/>
            <person name="Batalov S."/>
            <person name="Forrest A.R."/>
            <person name="Zavolan M."/>
            <person name="Davis M.J."/>
            <person name="Wilming L.G."/>
            <person name="Aidinis V."/>
            <person name="Allen J.E."/>
            <person name="Ambesi-Impiombato A."/>
            <person name="Apweiler R."/>
            <person name="Aturaliya R.N."/>
            <person name="Bailey T.L."/>
            <person name="Bansal M."/>
            <person name="Baxter L."/>
            <person name="Beisel K.W."/>
            <person name="Bersano T."/>
            <person name="Bono H."/>
            <person name="Chalk A.M."/>
            <person name="Chiu K.P."/>
            <person name="Choudhary V."/>
            <person name="Christoffels A."/>
            <person name="Clutterbuck D.R."/>
            <person name="Crowe M.L."/>
            <person name="Dalla E."/>
            <person name="Dalrymple B.P."/>
            <person name="de Bono B."/>
            <person name="Della Gatta G."/>
            <person name="di Bernardo D."/>
            <person name="Down T."/>
            <person name="Engstrom P."/>
            <person name="Fagiolini M."/>
            <person name="Faulkner G."/>
            <person name="Fletcher C.F."/>
            <person name="Fukushima T."/>
            <person name="Furuno M."/>
            <person name="Futaki S."/>
            <person name="Gariboldi M."/>
            <person name="Georgii-Hemming P."/>
            <person name="Gingeras T.R."/>
            <person name="Gojobori T."/>
            <person name="Green R.E."/>
            <person name="Gustincich S."/>
            <person name="Harbers M."/>
            <person name="Hayashi Y."/>
            <person name="Hensch T.K."/>
            <person name="Hirokawa N."/>
            <person name="Hill D."/>
            <person name="Huminiecki L."/>
            <person name="Iacono M."/>
            <person name="Ikeo K."/>
            <person name="Iwama A."/>
            <person name="Ishikawa T."/>
            <person name="Jakt M."/>
            <person name="Kanapin A."/>
            <person name="Katoh M."/>
            <person name="Kawasawa Y."/>
            <person name="Kelso J."/>
            <person name="Kitamura H."/>
            <person name="Kitano H."/>
            <person name="Kollias G."/>
            <person name="Krishnan S.P."/>
            <person name="Kruger A."/>
            <person name="Kummerfeld S.K."/>
            <person name="Kurochkin I.V."/>
            <person name="Lareau L.F."/>
            <person name="Lazarevic D."/>
            <person name="Lipovich L."/>
            <person name="Liu J."/>
            <person name="Liuni S."/>
            <person name="McWilliam S."/>
            <person name="Madan Babu M."/>
            <person name="Madera M."/>
            <person name="Marchionni L."/>
            <person name="Matsuda H."/>
            <person name="Matsuzawa S."/>
            <person name="Miki H."/>
            <person name="Mignone F."/>
            <person name="Miyake S."/>
            <person name="Morris K."/>
            <person name="Mottagui-Tabar S."/>
            <person name="Mulder N."/>
            <person name="Nakano N."/>
            <person name="Nakauchi H."/>
            <person name="Ng P."/>
            <person name="Nilsson R."/>
            <person name="Nishiguchi S."/>
            <person name="Nishikawa S."/>
            <person name="Nori F."/>
            <person name="Ohara O."/>
            <person name="Okazaki Y."/>
            <person name="Orlando V."/>
            <person name="Pang K.C."/>
            <person name="Pavan W.J."/>
            <person name="Pavesi G."/>
            <person name="Pesole G."/>
            <person name="Petrovsky N."/>
            <person name="Piazza S."/>
            <person name="Reed J."/>
            <person name="Reid J.F."/>
            <person name="Ring B.Z."/>
            <person name="Ringwald M."/>
            <person name="Rost B."/>
            <person name="Ruan Y."/>
            <person name="Salzberg S.L."/>
            <person name="Sandelin A."/>
            <person name="Schneider C."/>
            <person name="Schoenbach C."/>
            <person name="Sekiguchi K."/>
            <person name="Semple C.A."/>
            <person name="Seno S."/>
            <person name="Sessa L."/>
            <person name="Sheng Y."/>
            <person name="Shibata Y."/>
            <person name="Shimada H."/>
            <person name="Shimada K."/>
            <person name="Silva D."/>
            <person name="Sinclair B."/>
            <person name="Sperling S."/>
            <person name="Stupka E."/>
            <person name="Sugiura K."/>
            <person name="Sultana R."/>
            <person name="Takenaka Y."/>
            <person name="Taki K."/>
            <person name="Tammoja K."/>
            <person name="Tan S.L."/>
            <person name="Tang S."/>
            <person name="Taylor M.S."/>
            <person name="Tegner J."/>
            <person name="Teichmann S.A."/>
            <person name="Ueda H.R."/>
            <person name="van Nimwegen E."/>
            <person name="Verardo R."/>
            <person name="Wei C.L."/>
            <person name="Yagi K."/>
            <person name="Yamanishi H."/>
            <person name="Zabarovsky E."/>
            <person name="Zhu S."/>
            <person name="Zimmer A."/>
            <person name="Hide W."/>
            <person name="Bult C."/>
            <person name="Grimmond S.M."/>
            <person name="Teasdale R.D."/>
            <person name="Liu E.T."/>
            <person name="Brusic V."/>
            <person name="Quackenbush J."/>
            <person name="Wahlestedt C."/>
            <person name="Mattick J.S."/>
            <person name="Hume D.A."/>
            <person name="Kai C."/>
            <person name="Sasaki D."/>
            <person name="Tomaru Y."/>
            <person name="Fukuda S."/>
            <person name="Kanamori-Katayama M."/>
            <person name="Suzuki M."/>
            <person name="Aoki J."/>
            <person name="Arakawa T."/>
            <person name="Iida J."/>
            <person name="Imamura K."/>
            <person name="Itoh M."/>
            <person name="Kato T."/>
            <person name="Kawaji H."/>
            <person name="Kawagashira N."/>
            <person name="Kawashima T."/>
            <person name="Kojima M."/>
            <person name="Kondo S."/>
            <person name="Konno H."/>
            <person name="Nakano K."/>
            <person name="Ninomiya N."/>
            <person name="Nishio T."/>
            <person name="Okada M."/>
            <person name="Plessy C."/>
            <person name="Shibata K."/>
            <person name="Shiraki T."/>
            <person name="Suzuki S."/>
            <person name="Tagami M."/>
            <person name="Waki K."/>
            <person name="Watahiki A."/>
            <person name="Okamura-Oho Y."/>
            <person name="Suzuki H."/>
            <person name="Kawai J."/>
            <person name="Hayashizaki Y."/>
        </authorList>
    </citation>
    <scope>NUCLEOTIDE SEQUENCE [LARGE SCALE MRNA]</scope>
    <source>
        <strain>C57BL/6J</strain>
        <tissue>Kidney</tissue>
    </source>
</reference>
<reference key="4">
    <citation type="journal article" date="2004" name="Genome Res.">
        <title>The status, quality, and expansion of the NIH full-length cDNA project: the Mammalian Gene Collection (MGC).</title>
        <authorList>
            <consortium name="The MGC Project Team"/>
        </authorList>
    </citation>
    <scope>NUCLEOTIDE SEQUENCE [LARGE SCALE MRNA]</scope>
    <source>
        <tissue>Colon</tissue>
    </source>
</reference>
<accession>P19788</accession>
<accession>Q6LD77</accession>
<accession>Q8JZW0</accession>
<organism>
    <name type="scientific">Mus musculus</name>
    <name type="common">Mouse</name>
    <dbReference type="NCBI Taxonomy" id="10090"/>
    <lineage>
        <taxon>Eukaryota</taxon>
        <taxon>Metazoa</taxon>
        <taxon>Chordata</taxon>
        <taxon>Craniata</taxon>
        <taxon>Vertebrata</taxon>
        <taxon>Euteleostomi</taxon>
        <taxon>Mammalia</taxon>
        <taxon>Eutheria</taxon>
        <taxon>Euarchontoglires</taxon>
        <taxon>Glires</taxon>
        <taxon>Rodentia</taxon>
        <taxon>Myomorpha</taxon>
        <taxon>Muroidea</taxon>
        <taxon>Muridae</taxon>
        <taxon>Murinae</taxon>
        <taxon>Mus</taxon>
        <taxon>Mus</taxon>
    </lineage>
</organism>
<feature type="signal peptide">
    <location>
        <begin position="1"/>
        <end position="19"/>
    </location>
</feature>
<feature type="chain" id="PRO_0000011111" description="Matrix Gla protein">
    <location>
        <begin position="20"/>
        <end position="104"/>
    </location>
</feature>
<feature type="domain" description="Gla" evidence="2">
    <location>
        <begin position="51"/>
        <end position="97"/>
    </location>
</feature>
<feature type="modified residue" description="4-carboxyglutamate" evidence="1 2">
    <location>
        <position position="21"/>
    </location>
</feature>
<feature type="modified residue" description="Phosphoserine" evidence="1">
    <location>
        <position position="22"/>
    </location>
</feature>
<feature type="modified residue" description="Phosphoserine" evidence="1">
    <location>
        <position position="25"/>
    </location>
</feature>
<feature type="modified residue" description="Phosphoserine" evidence="1">
    <location>
        <position position="28"/>
    </location>
</feature>
<feature type="modified residue" description="4-carboxyglutamate" evidence="1 2">
    <location>
        <position position="60"/>
    </location>
</feature>
<feature type="modified residue" description="4-carboxyglutamate" evidence="1 2">
    <location>
        <position position="67"/>
    </location>
</feature>
<feature type="modified residue" description="4-carboxyglutamate" evidence="1 2">
    <location>
        <position position="71"/>
    </location>
</feature>
<feature type="disulfide bond" evidence="2">
    <location>
        <begin position="73"/>
        <end position="79"/>
    </location>
</feature>
<feature type="sequence conflict" description="In Ref. 2; AAP31997." evidence="3" ref="2">
    <original>S</original>
    <variation>I</variation>
    <location>
        <position position="25"/>
    </location>
</feature>
<feature type="sequence conflict" description="In Ref. 4; AAH36991." evidence="3" ref="4">
    <original>K</original>
    <variation>R</variation>
    <location>
        <position position="103"/>
    </location>
</feature>
<gene>
    <name type="primary">Mgp</name>
    <name type="synonym">Mglap</name>
</gene>
<dbReference type="EMBL" id="D00613">
    <property type="protein sequence ID" value="BAA00488.1"/>
    <property type="molecule type" value="mRNA"/>
</dbReference>
<dbReference type="EMBL" id="S77350">
    <property type="protein sequence ID" value="AAP31997.1"/>
    <property type="molecule type" value="Genomic_DNA"/>
</dbReference>
<dbReference type="EMBL" id="AK018719">
    <property type="protein sequence ID" value="BAB31365.1"/>
    <property type="molecule type" value="mRNA"/>
</dbReference>
<dbReference type="EMBL" id="BC036991">
    <property type="protein sequence ID" value="AAH36991.1"/>
    <property type="molecule type" value="mRNA"/>
</dbReference>
<dbReference type="CCDS" id="CCDS20659.1"/>
<dbReference type="PIR" id="JQ0455">
    <property type="entry name" value="GEMSM1"/>
</dbReference>
<dbReference type="RefSeq" id="NP_032623.1">
    <property type="nucleotide sequence ID" value="NM_008597.4"/>
</dbReference>
<dbReference type="SMR" id="P19788"/>
<dbReference type="BioGRID" id="201414">
    <property type="interactions" value="18"/>
</dbReference>
<dbReference type="FunCoup" id="P19788">
    <property type="interactions" value="89"/>
</dbReference>
<dbReference type="IntAct" id="P19788">
    <property type="interactions" value="17"/>
</dbReference>
<dbReference type="STRING" id="10090.ENSMUSP00000032342"/>
<dbReference type="PhosphoSitePlus" id="P19788"/>
<dbReference type="jPOST" id="P19788"/>
<dbReference type="PaxDb" id="10090-ENSMUSP00000032342"/>
<dbReference type="PeptideAtlas" id="P19788"/>
<dbReference type="ProteomicsDB" id="295564"/>
<dbReference type="Pumba" id="P19788"/>
<dbReference type="Antibodypedia" id="2842">
    <property type="antibodies" value="310 antibodies from 30 providers"/>
</dbReference>
<dbReference type="DNASU" id="17313"/>
<dbReference type="Ensembl" id="ENSMUST00000032342.3">
    <property type="protein sequence ID" value="ENSMUSP00000032342.2"/>
    <property type="gene ID" value="ENSMUSG00000030218.3"/>
</dbReference>
<dbReference type="GeneID" id="17313"/>
<dbReference type="KEGG" id="mmu:17313"/>
<dbReference type="UCSC" id="uc009eml.1">
    <property type="organism name" value="mouse"/>
</dbReference>
<dbReference type="AGR" id="MGI:96976"/>
<dbReference type="CTD" id="4256"/>
<dbReference type="MGI" id="MGI:96976">
    <property type="gene designation" value="Mgp"/>
</dbReference>
<dbReference type="VEuPathDB" id="HostDB:ENSMUSG00000030218"/>
<dbReference type="eggNOG" id="ENOG502S45A">
    <property type="taxonomic scope" value="Eukaryota"/>
</dbReference>
<dbReference type="GeneTree" id="ENSGT00390000003753"/>
<dbReference type="HOGENOM" id="CLU_177119_1_0_1"/>
<dbReference type="InParanoid" id="P19788"/>
<dbReference type="OMA" id="TAFCYES"/>
<dbReference type="OrthoDB" id="8958520at2759"/>
<dbReference type="PhylomeDB" id="P19788"/>
<dbReference type="TreeFam" id="TF330920"/>
<dbReference type="BioGRID-ORCS" id="17313">
    <property type="hits" value="1 hit in 78 CRISPR screens"/>
</dbReference>
<dbReference type="ChiTaRS" id="Mgp">
    <property type="organism name" value="mouse"/>
</dbReference>
<dbReference type="PRO" id="PR:P19788"/>
<dbReference type="Proteomes" id="UP000000589">
    <property type="component" value="Chromosome 6"/>
</dbReference>
<dbReference type="RNAct" id="P19788">
    <property type="molecule type" value="protein"/>
</dbReference>
<dbReference type="Bgee" id="ENSMUSG00000030218">
    <property type="expression patterns" value="Expressed in aorta tunica media and 260 other cell types or tissues"/>
</dbReference>
<dbReference type="GO" id="GO:0031012">
    <property type="term" value="C:extracellular matrix"/>
    <property type="evidence" value="ECO:0007669"/>
    <property type="project" value="InterPro"/>
</dbReference>
<dbReference type="GO" id="GO:0005576">
    <property type="term" value="C:extracellular region"/>
    <property type="evidence" value="ECO:0007669"/>
    <property type="project" value="UniProtKB-SubCell"/>
</dbReference>
<dbReference type="GO" id="GO:0005509">
    <property type="term" value="F:calcium ion binding"/>
    <property type="evidence" value="ECO:0007669"/>
    <property type="project" value="InterPro"/>
</dbReference>
<dbReference type="GO" id="GO:0051216">
    <property type="term" value="P:cartilage development"/>
    <property type="evidence" value="ECO:0007669"/>
    <property type="project" value="UniProtKB-KW"/>
</dbReference>
<dbReference type="GO" id="GO:0030154">
    <property type="term" value="P:cell differentiation"/>
    <property type="evidence" value="ECO:0007669"/>
    <property type="project" value="UniProtKB-KW"/>
</dbReference>
<dbReference type="GO" id="GO:0001503">
    <property type="term" value="P:ossification"/>
    <property type="evidence" value="ECO:0007669"/>
    <property type="project" value="UniProtKB-KW"/>
</dbReference>
<dbReference type="GO" id="GO:0030500">
    <property type="term" value="P:regulation of bone mineralization"/>
    <property type="evidence" value="ECO:0007669"/>
    <property type="project" value="InterPro"/>
</dbReference>
<dbReference type="InterPro" id="IPR035972">
    <property type="entry name" value="GLA-like_dom_SF"/>
</dbReference>
<dbReference type="InterPro" id="IPR000294">
    <property type="entry name" value="GLA_domain"/>
</dbReference>
<dbReference type="InterPro" id="IPR027118">
    <property type="entry name" value="MGP"/>
</dbReference>
<dbReference type="InterPro" id="IPR002384">
    <property type="entry name" value="Osteocalcin/MGP"/>
</dbReference>
<dbReference type="PANTHER" id="PTHR10109">
    <property type="entry name" value="MATRIX GLA PROTEIN"/>
    <property type="match status" value="1"/>
</dbReference>
<dbReference type="PANTHER" id="PTHR10109:SF0">
    <property type="entry name" value="MATRIX GLA PROTEIN"/>
    <property type="match status" value="1"/>
</dbReference>
<dbReference type="PRINTS" id="PR00002">
    <property type="entry name" value="GLABONE"/>
</dbReference>
<dbReference type="SMART" id="SM00069">
    <property type="entry name" value="GLA"/>
    <property type="match status" value="1"/>
</dbReference>
<dbReference type="SUPFAM" id="SSF57630">
    <property type="entry name" value="GLA-domain"/>
    <property type="match status" value="1"/>
</dbReference>
<dbReference type="PROSITE" id="PS00011">
    <property type="entry name" value="GLA_1"/>
    <property type="match status" value="1"/>
</dbReference>
<dbReference type="PROSITE" id="PS50998">
    <property type="entry name" value="GLA_2"/>
    <property type="match status" value="1"/>
</dbReference>
<keyword id="KW-0891">Chondrogenesis</keyword>
<keyword id="KW-0217">Developmental protein</keyword>
<keyword id="KW-0221">Differentiation</keyword>
<keyword id="KW-1015">Disulfide bond</keyword>
<keyword id="KW-0301">Gamma-carboxyglutamic acid</keyword>
<keyword id="KW-0892">Osteogenesis</keyword>
<keyword id="KW-0597">Phosphoprotein</keyword>
<keyword id="KW-1185">Reference proteome</keyword>
<keyword id="KW-0964">Secreted</keyword>
<keyword id="KW-0732">Signal</keyword>
<proteinExistence type="inferred from homology"/>
<evidence type="ECO:0000250" key="1">
    <source>
        <dbReference type="UniProtKB" id="P07507"/>
    </source>
</evidence>
<evidence type="ECO:0000255" key="2">
    <source>
        <dbReference type="PROSITE-ProRule" id="PRU00463"/>
    </source>
</evidence>
<evidence type="ECO:0000305" key="3"/>
<sequence>MKSLLPLAILAALAVATLCYESHESMESYEISPFINRRNANTFMSPQQRWRAKAQKRVQERNKPAYEINREACDDYKLCERYAMVYGYNAAYNRYFRQRRGAKY</sequence>
<comment type="function">
    <text>Associates with the organic matrix of bone and cartilage. Thought to act as an inhibitor of bone formation.</text>
</comment>
<comment type="subcellular location">
    <subcellularLocation>
        <location>Secreted</location>
    </subcellularLocation>
</comment>
<comment type="PTM">
    <text>Requires vitamin K-dependent gamma-carboxylation for its function.</text>
</comment>
<comment type="similarity">
    <text evidence="3">Belongs to the osteocalcin/matrix Gla protein family.</text>
</comment>
<name>MGP_MOUSE</name>
<protein>
    <recommendedName>
        <fullName>Matrix Gla protein</fullName>
        <shortName>MGP</shortName>
    </recommendedName>
</protein>